<evidence type="ECO:0000255" key="1"/>
<evidence type="ECO:0000255" key="2">
    <source>
        <dbReference type="PROSITE-ProRule" id="PRU00556"/>
    </source>
</evidence>
<evidence type="ECO:0000256" key="3">
    <source>
        <dbReference type="SAM" id="MobiDB-lite"/>
    </source>
</evidence>
<evidence type="ECO:0000305" key="4"/>
<reference key="1">
    <citation type="journal article" date="1999" name="Nat. Genet.">
        <title>Comparative genomes of Chlamydia pneumoniae and C. trachomatis.</title>
        <authorList>
            <person name="Kalman S."/>
            <person name="Mitchell W.P."/>
            <person name="Marathe R."/>
            <person name="Lammel C.J."/>
            <person name="Fan J."/>
            <person name="Hyman R.W."/>
            <person name="Olinger L."/>
            <person name="Grimwood J."/>
            <person name="Davis R.W."/>
            <person name="Stephens R.S."/>
        </authorList>
    </citation>
    <scope>NUCLEOTIDE SEQUENCE [LARGE SCALE GENOMIC DNA]</scope>
    <source>
        <strain>CWL029</strain>
    </source>
</reference>
<reference key="2">
    <citation type="journal article" date="2000" name="Nucleic Acids Res.">
        <title>Genome sequences of Chlamydia trachomatis MoPn and Chlamydia pneumoniae AR39.</title>
        <authorList>
            <person name="Read T.D."/>
            <person name="Brunham R.C."/>
            <person name="Shen C."/>
            <person name="Gill S.R."/>
            <person name="Heidelberg J.F."/>
            <person name="White O."/>
            <person name="Hickey E.K."/>
            <person name="Peterson J.D."/>
            <person name="Utterback T.R."/>
            <person name="Berry K.J."/>
            <person name="Bass S."/>
            <person name="Linher K.D."/>
            <person name="Weidman J.F."/>
            <person name="Khouri H.M."/>
            <person name="Craven B."/>
            <person name="Bowman C."/>
            <person name="Dodson R.J."/>
            <person name="Gwinn M.L."/>
            <person name="Nelson W.C."/>
            <person name="DeBoy R.T."/>
            <person name="Kolonay J.F."/>
            <person name="McClarty G."/>
            <person name="Salzberg S.L."/>
            <person name="Eisen J.A."/>
            <person name="Fraser C.M."/>
        </authorList>
    </citation>
    <scope>NUCLEOTIDE SEQUENCE [LARGE SCALE GENOMIC DNA]</scope>
    <source>
        <strain>AR39</strain>
    </source>
</reference>
<reference key="3">
    <citation type="journal article" date="2000" name="Nucleic Acids Res.">
        <title>Comparison of whole genome sequences of Chlamydia pneumoniae J138 from Japan and CWL029 from USA.</title>
        <authorList>
            <person name="Shirai M."/>
            <person name="Hirakawa H."/>
            <person name="Kimoto M."/>
            <person name="Tabuchi M."/>
            <person name="Kishi F."/>
            <person name="Ouchi K."/>
            <person name="Shiba T."/>
            <person name="Ishii K."/>
            <person name="Hattori M."/>
            <person name="Kuhara S."/>
            <person name="Nakazawa T."/>
        </authorList>
    </citation>
    <scope>NUCLEOTIDE SEQUENCE [LARGE SCALE GENOMIC DNA]</scope>
    <source>
        <strain>J138</strain>
    </source>
</reference>
<reference key="4">
    <citation type="journal article" date="2000" name="J. Infect. Dis. 181 Suppl.">
        <title>Comparison of outer membrane protein genes omp and pmp in the whole genome sequences of Chlamydia pneumoniae isolates from Japan and the United States.</title>
        <authorList>
            <person name="Shirai M."/>
            <person name="Hirakawa H."/>
            <person name="Ouchi K."/>
            <person name="Tabuchi M."/>
            <person name="Kishi F."/>
            <person name="Kimoto M."/>
            <person name="Takeuchi H."/>
            <person name="Nishida J."/>
            <person name="Shibata K."/>
            <person name="Fujinaga R."/>
            <person name="Yoneda H."/>
            <person name="Matsushima H."/>
            <person name="Tanaka C."/>
            <person name="Furukawa S."/>
            <person name="Miura K."/>
            <person name="Nakazawa A."/>
            <person name="Ishii K."/>
            <person name="Shiba T."/>
            <person name="Hattori M."/>
            <person name="Kuhara S."/>
            <person name="Nakazawa T."/>
        </authorList>
    </citation>
    <scope>NUCLEOTIDE SEQUENCE [GENOMIC DNA]</scope>
    <source>
        <strain>J138</strain>
    </source>
</reference>
<reference key="5">
    <citation type="submission" date="2002-05" db="EMBL/GenBank/DDBJ databases">
        <title>The genome sequence of Chlamydia pneumoniae TW183 and comparison with other Chlamydia strains based on whole genome sequence analysis.</title>
        <authorList>
            <person name="Geng M.M."/>
            <person name="Schuhmacher A."/>
            <person name="Muehldorfer I."/>
            <person name="Bensch K.W."/>
            <person name="Schaefer K.P."/>
            <person name="Schneider S."/>
            <person name="Pohl T."/>
            <person name="Essig A."/>
            <person name="Marre R."/>
            <person name="Melchers K."/>
        </authorList>
    </citation>
    <scope>NUCLEOTIDE SEQUENCE [LARGE SCALE GENOMIC DNA]</scope>
    <source>
        <strain>TW-183</strain>
    </source>
</reference>
<dbReference type="EMBL" id="AE001363">
    <property type="protein sequence ID" value="AAD18680.1"/>
    <property type="molecule type" value="Genomic_DNA"/>
</dbReference>
<dbReference type="EMBL" id="AE002161">
    <property type="protein sequence ID" value="AAF38082.1"/>
    <property type="status" value="ALT_INIT"/>
    <property type="molecule type" value="Genomic_DNA"/>
</dbReference>
<dbReference type="EMBL" id="BA000008">
    <property type="protein sequence ID" value="BAA98746.1"/>
    <property type="molecule type" value="Genomic_DNA"/>
</dbReference>
<dbReference type="EMBL" id="AE009440">
    <property type="protein sequence ID" value="AAP98490.1"/>
    <property type="molecule type" value="Genomic_DNA"/>
</dbReference>
<dbReference type="PIR" id="C81601">
    <property type="entry name" value="C81601"/>
</dbReference>
<dbReference type="PIR" id="E72067">
    <property type="entry name" value="E72067"/>
</dbReference>
<dbReference type="PIR" id="H86557">
    <property type="entry name" value="H86557"/>
</dbReference>
<dbReference type="RefSeq" id="NP_224736.1">
    <property type="nucleotide sequence ID" value="NC_000922.1"/>
</dbReference>
<dbReference type="RefSeq" id="WP_010883178.1">
    <property type="nucleotide sequence ID" value="NZ_LN847257.1"/>
</dbReference>
<dbReference type="STRING" id="406984.CPK_ORF01055"/>
<dbReference type="GeneID" id="45050582"/>
<dbReference type="KEGG" id="cpa:CP_0212"/>
<dbReference type="KEGG" id="cpj:pmp_20"/>
<dbReference type="KEGG" id="cpn:CPn_0540"/>
<dbReference type="KEGG" id="cpt:CpB0561"/>
<dbReference type="PATRIC" id="fig|115713.3.peg.600"/>
<dbReference type="eggNOG" id="COG3210">
    <property type="taxonomic scope" value="Bacteria"/>
</dbReference>
<dbReference type="HOGENOM" id="CLU_001452_0_0_0"/>
<dbReference type="OrthoDB" id="16561at2"/>
<dbReference type="Proteomes" id="UP000000583">
    <property type="component" value="Chromosome"/>
</dbReference>
<dbReference type="Proteomes" id="UP000000801">
    <property type="component" value="Chromosome"/>
</dbReference>
<dbReference type="GO" id="GO:0009279">
    <property type="term" value="C:cell outer membrane"/>
    <property type="evidence" value="ECO:0007669"/>
    <property type="project" value="UniProtKB-SubCell"/>
</dbReference>
<dbReference type="GO" id="GO:0005576">
    <property type="term" value="C:extracellular region"/>
    <property type="evidence" value="ECO:0007669"/>
    <property type="project" value="UniProtKB-KW"/>
</dbReference>
<dbReference type="GO" id="GO:0043130">
    <property type="term" value="F:ubiquitin binding"/>
    <property type="evidence" value="ECO:0007669"/>
    <property type="project" value="TreeGrafter"/>
</dbReference>
<dbReference type="GO" id="GO:0000724">
    <property type="term" value="P:double-strand break repair via homologous recombination"/>
    <property type="evidence" value="ECO:0007669"/>
    <property type="project" value="TreeGrafter"/>
</dbReference>
<dbReference type="Gene3D" id="2.40.128.130">
    <property type="entry name" value="Autotransporter beta-domain"/>
    <property type="match status" value="1"/>
</dbReference>
<dbReference type="InterPro" id="IPR005546">
    <property type="entry name" value="Autotransporte_beta"/>
</dbReference>
<dbReference type="InterPro" id="IPR036709">
    <property type="entry name" value="Autotransporte_beta_dom_sf"/>
</dbReference>
<dbReference type="InterPro" id="IPR006626">
    <property type="entry name" value="PbH1"/>
</dbReference>
<dbReference type="InterPro" id="IPR011050">
    <property type="entry name" value="Pectin_lyase_fold/virulence"/>
</dbReference>
<dbReference type="InterPro" id="IPR011427">
    <property type="entry name" value="Polymorphic_membr_middle"/>
</dbReference>
<dbReference type="InterPro" id="IPR003368">
    <property type="entry name" value="POMP_repeat"/>
</dbReference>
<dbReference type="InterPro" id="IPR051246">
    <property type="entry name" value="WDR48"/>
</dbReference>
<dbReference type="NCBIfam" id="TIGR01376">
    <property type="entry name" value="POMP_repeat"/>
    <property type="match status" value="11"/>
</dbReference>
<dbReference type="PANTHER" id="PTHR19862">
    <property type="entry name" value="WD REPEAT-CONTAINING PROTEIN 48"/>
    <property type="match status" value="1"/>
</dbReference>
<dbReference type="PANTHER" id="PTHR19862:SF14">
    <property type="entry name" value="WD REPEAT-CONTAINING PROTEIN 48"/>
    <property type="match status" value="1"/>
</dbReference>
<dbReference type="Pfam" id="PF03797">
    <property type="entry name" value="Autotransporter"/>
    <property type="match status" value="1"/>
</dbReference>
<dbReference type="Pfam" id="PF02415">
    <property type="entry name" value="Chlam_PMP"/>
    <property type="match status" value="8"/>
</dbReference>
<dbReference type="Pfam" id="PF07548">
    <property type="entry name" value="ChlamPMP_M"/>
    <property type="match status" value="1"/>
</dbReference>
<dbReference type="SMART" id="SM00869">
    <property type="entry name" value="Autotransporter"/>
    <property type="match status" value="1"/>
</dbReference>
<dbReference type="SMART" id="SM00710">
    <property type="entry name" value="PbH1"/>
    <property type="match status" value="13"/>
</dbReference>
<dbReference type="SUPFAM" id="SSF103515">
    <property type="entry name" value="Autotransporter"/>
    <property type="match status" value="1"/>
</dbReference>
<dbReference type="SUPFAM" id="SSF51126">
    <property type="entry name" value="Pectin lyase-like"/>
    <property type="match status" value="3"/>
</dbReference>
<dbReference type="PROSITE" id="PS51208">
    <property type="entry name" value="AUTOTRANSPORTER"/>
    <property type="match status" value="1"/>
</dbReference>
<accession>Q9Z812</accession>
<accession>Q9K2C1</accession>
<accession>Q9RB59</accession>
<comment type="subcellular location">
    <subcellularLocation>
        <location>Secreted</location>
        <location>Cell wall</location>
    </subcellularLocation>
    <subcellularLocation>
        <location evidence="4">Cell outer membrane</location>
        <topology evidence="4">Peripheral membrane protein</topology>
        <orientation evidence="4">Extracellular side</orientation>
    </subcellularLocation>
</comment>
<comment type="developmental stage">
    <text>Elementary body.</text>
</comment>
<comment type="similarity">
    <text evidence="4">Belongs to the PMP outer membrane protein family.</text>
</comment>
<comment type="sequence caution" evidence="4">
    <conflict type="erroneous initiation">
        <sequence resource="EMBL-CDS" id="AAF38082"/>
    </conflict>
</comment>
<organism>
    <name type="scientific">Chlamydia pneumoniae</name>
    <name type="common">Chlamydophila pneumoniae</name>
    <dbReference type="NCBI Taxonomy" id="83558"/>
    <lineage>
        <taxon>Bacteria</taxon>
        <taxon>Pseudomonadati</taxon>
        <taxon>Chlamydiota</taxon>
        <taxon>Chlamydiia</taxon>
        <taxon>Chlamydiales</taxon>
        <taxon>Chlamydiaceae</taxon>
        <taxon>Chlamydia/Chlamydophila group</taxon>
        <taxon>Chlamydia</taxon>
    </lineage>
</organism>
<gene>
    <name type="primary">pmp20</name>
    <name type="ordered locus">CPn_0540</name>
    <name type="ordered locus">CP_0212</name>
    <name type="ordered locus">CpB0561</name>
</gene>
<proteinExistence type="evidence at transcript level"/>
<feature type="signal peptide" evidence="1">
    <location>
        <begin position="1"/>
        <end position="21"/>
    </location>
</feature>
<feature type="chain" id="PRO_0000024749" description="Probable outer membrane protein pmp20">
    <location>
        <begin position="22"/>
        <end position="1723"/>
    </location>
</feature>
<feature type="domain" description="Autotransporter" evidence="2">
    <location>
        <begin position="1434"/>
        <end position="1723"/>
    </location>
</feature>
<feature type="region of interest" description="Disordered" evidence="3">
    <location>
        <begin position="78"/>
        <end position="100"/>
    </location>
</feature>
<feature type="region of interest" description="Disordered" evidence="3">
    <location>
        <begin position="139"/>
        <end position="161"/>
    </location>
</feature>
<feature type="compositionally biased region" description="Low complexity" evidence="3">
    <location>
        <begin position="85"/>
        <end position="100"/>
    </location>
</feature>
<feature type="compositionally biased region" description="Low complexity" evidence="3">
    <location>
        <begin position="140"/>
        <end position="161"/>
    </location>
</feature>
<feature type="sequence variant" description="In strain: CWL029 and TW-183.">
    <original>I</original>
    <variation>V</variation>
    <location>
        <position position="1134"/>
    </location>
</feature>
<protein>
    <recommendedName>
        <fullName>Probable outer membrane protein pmp20</fullName>
    </recommendedName>
    <alternativeName>
        <fullName>Polymorphic membrane protein 20</fullName>
    </alternativeName>
</protein>
<keyword id="KW-0998">Cell outer membrane</keyword>
<keyword id="KW-0134">Cell wall</keyword>
<keyword id="KW-0472">Membrane</keyword>
<keyword id="KW-0964">Secreted</keyword>
<keyword id="KW-0732">Signal</keyword>
<keyword id="KW-0812">Transmembrane</keyword>
<keyword id="KW-1134">Transmembrane beta strand</keyword>
<sequence>MKWLPATAVFAAVLPALTAFGDPASVEISTSHTGSGDPTSDAALTGFTQSSTETDGTTYTIVGDITFSTFTNIPVPVVTPDANDSSSNSSKGGSSSSGATSLIRSSNLHSDFDFTKDSVLDLYHLFFPSASNTLNPALLSSSSSGGSSSSSSSSSSGSASAVVAADPKGGAAFYSNEANGTLTFTTDSGNPGSLTLQNLKMTGDGAAIYSKGPLVFTGLKNLTFTGNESQKSGGAAYTEGALTTQAIVEAVTFTGNTSAGQGGAIYVKEATLFNALDSLKFEKNTSGQAGGGIYTESTLTISNITKSIEFISNKASVPAPAPEPTSPAPSSLINSTTIDTSTLQTRAASATPAVAPVAAVTPTPISTQETAGNGGAIYAKQGISISTFKDLTFKSNSASVDATLTVDSSTIGESGGAIFAADSIQIQQCTGTTLFSGNTANKSGGGIYAVGQVTLEDIANLKMTNNTCKGEGGAIYTKKALTINNGAILTTFSGNTSTDNGGAIFAVGGITLSDLVEVRFSKNKTGNYSAPITKAASNTAPVVSSSTTAASPAVPAAAAAPVTNAAKGGALYSTEGLTVSGITSILSFENNECQNQGGGAYVTKTFQCSDSHRLQFTSNKAADEGGGLYCGDDVTLTNLTGKTLFQENSSEKHGGGLSLASGKSLTMTSLESFCLNANTAKENGGGANVPENIVLTFTYTPTPNEPAPVQQPVYGEALVTGNTATKSGGGIYTKNAAFSNLSSVTFDQNTSSENGGALLTQKAADKTDCSFTYITNVNITNNTATGNGGGIAGGKAHFDRIDNLTVQSNQAKKGGGVYLEDALILEKVITGSVSQNTATESGGGIYAKDIQLQALPGSFTITDNKVETSLTTSTNLYGGGIYSSGAVTLTNISGTFGITGNSVINTATSQDADIQGGGIYATTSLSINQCNTPILFSNNSAATKKTSTTKQIAGGAIFSAAVTIENNSQPIIFLNNSAKSEATTAATAGNKDSCGGAIAANSVTLTNNPEITFKGNYAETGGAIGCIDLTNGSPPRKVSIADNGSVLFQDNSALNRGGAIYGETIDISRTGATFIGNSSKHDGSAICCSTALTLAPNSQLIFENNKVTETTATTKASINNLGAAIYGNNETSDITISLSAENGSIFFKNNLCTATNKYCSIAGNVKFTAIEASAGKAISFYDAVNVSTKETNAQELKLNEKATSTGTILFSGELHENKSYIPQKVTFAHGNLILGKNAELSVVSFTQSPGTTITMGPGSVLSNHSKEAGGIAINNVIIDFSEIVPTKDNATVAPPTLKLVSRTNADSKDKIDITGTVTLLDPNGNLYQNSYLGEDRDITLFNIDNSASGAVTATNVTLQGNLGAKKGYLGTWNLDPNSSGSKIILKWTFDKYLRWPYIPRDNHFYINSIWGAQNSLVTVKQGILGNMLNNARFEDPAFNNFWASAIGSFLRKEVSRNSDSFTYHGRGYTAAVDAKPRQEFILGAAFSQVFGHAESEYHLDNYKHKGSGHSTQASLYAGNIFYFPAIRSRPILFQGVATYGYMQHDTTTYYPSIEEKNMANWDSIAWLFDLRFSVDLKEPQPHSTARLTFYTEAEYTRIRQEKFTELDYDPRSFSACSYGNLAIPTGFSVDGALAWREIILYNKVSAAYLPVILRNNPKATYEVLSTKEKGNVVNVLPTRNAARAEVSSQIYLGSYWTLYGTYTIDASMNTLVQMANGGIRFVF</sequence>
<name>PMP20_CHLPN</name>